<name>RL23_WIGBR</name>
<evidence type="ECO:0000255" key="1">
    <source>
        <dbReference type="HAMAP-Rule" id="MF_01369"/>
    </source>
</evidence>
<evidence type="ECO:0000305" key="2"/>
<accession>Q8D210</accession>
<proteinExistence type="inferred from homology"/>
<dbReference type="EMBL" id="BA000021">
    <property type="protein sequence ID" value="BAC24691.1"/>
    <property type="molecule type" value="Genomic_DNA"/>
</dbReference>
<dbReference type="SMR" id="Q8D210"/>
<dbReference type="STRING" id="36870.gene:10369054"/>
<dbReference type="KEGG" id="wbr:rplW"/>
<dbReference type="eggNOG" id="COG0089">
    <property type="taxonomic scope" value="Bacteria"/>
</dbReference>
<dbReference type="HOGENOM" id="CLU_037562_3_1_6"/>
<dbReference type="OrthoDB" id="9793353at2"/>
<dbReference type="Proteomes" id="UP000000562">
    <property type="component" value="Chromosome"/>
</dbReference>
<dbReference type="GO" id="GO:1990904">
    <property type="term" value="C:ribonucleoprotein complex"/>
    <property type="evidence" value="ECO:0007669"/>
    <property type="project" value="UniProtKB-KW"/>
</dbReference>
<dbReference type="GO" id="GO:0005840">
    <property type="term" value="C:ribosome"/>
    <property type="evidence" value="ECO:0007669"/>
    <property type="project" value="UniProtKB-KW"/>
</dbReference>
<dbReference type="GO" id="GO:0019843">
    <property type="term" value="F:rRNA binding"/>
    <property type="evidence" value="ECO:0007669"/>
    <property type="project" value="UniProtKB-UniRule"/>
</dbReference>
<dbReference type="GO" id="GO:0003735">
    <property type="term" value="F:structural constituent of ribosome"/>
    <property type="evidence" value="ECO:0007669"/>
    <property type="project" value="InterPro"/>
</dbReference>
<dbReference type="GO" id="GO:0006412">
    <property type="term" value="P:translation"/>
    <property type="evidence" value="ECO:0007669"/>
    <property type="project" value="UniProtKB-UniRule"/>
</dbReference>
<dbReference type="Gene3D" id="3.30.70.330">
    <property type="match status" value="1"/>
</dbReference>
<dbReference type="HAMAP" id="MF_01369_B">
    <property type="entry name" value="Ribosomal_uL23_B"/>
    <property type="match status" value="1"/>
</dbReference>
<dbReference type="InterPro" id="IPR012677">
    <property type="entry name" value="Nucleotide-bd_a/b_plait_sf"/>
</dbReference>
<dbReference type="InterPro" id="IPR013025">
    <property type="entry name" value="Ribosomal_uL23-like"/>
</dbReference>
<dbReference type="InterPro" id="IPR012678">
    <property type="entry name" value="Ribosomal_uL23/eL15/eS24_sf"/>
</dbReference>
<dbReference type="NCBIfam" id="NF004359">
    <property type="entry name" value="PRK05738.1-3"/>
    <property type="match status" value="1"/>
</dbReference>
<dbReference type="NCBIfam" id="NF004363">
    <property type="entry name" value="PRK05738.2-4"/>
    <property type="match status" value="1"/>
</dbReference>
<dbReference type="PANTHER" id="PTHR12059:SF8">
    <property type="entry name" value="50S RIBOSOMAL PROTEIN L23"/>
    <property type="match status" value="1"/>
</dbReference>
<dbReference type="PANTHER" id="PTHR12059">
    <property type="entry name" value="RIBOSOMAL PROTEIN L23-RELATED"/>
    <property type="match status" value="1"/>
</dbReference>
<dbReference type="Pfam" id="PF00276">
    <property type="entry name" value="Ribosomal_L23"/>
    <property type="match status" value="1"/>
</dbReference>
<dbReference type="SUPFAM" id="SSF54189">
    <property type="entry name" value="Ribosomal proteins S24e, L23 and L15e"/>
    <property type="match status" value="1"/>
</dbReference>
<protein>
    <recommendedName>
        <fullName evidence="1">Large ribosomal subunit protein uL23</fullName>
    </recommendedName>
    <alternativeName>
        <fullName evidence="2">50S ribosomal protein L23</fullName>
    </alternativeName>
</protein>
<gene>
    <name evidence="1" type="primary">rplW</name>
    <name type="ordered locus">WIGBR5450</name>
</gene>
<sequence length="101" mass="11849">MINKKENIFKILTSSYSSEKSSILSEKNNTFTFKVLKNSKKSEIKSSIEKFFNVKVKKVRTVMLKGKSKKHKNIIGKRKNWKKAYVVLKKNQKINLIKNIE</sequence>
<comment type="function">
    <text evidence="1">One of the early assembly proteins it binds 23S rRNA. One of the proteins that surrounds the polypeptide exit tunnel on the outside of the ribosome. Forms the main docking site for trigger factor binding to the ribosome.</text>
</comment>
<comment type="subunit">
    <text evidence="1">Part of the 50S ribosomal subunit. Contacts protein L29, and trigger factor when it is bound to the ribosome.</text>
</comment>
<comment type="similarity">
    <text evidence="1">Belongs to the universal ribosomal protein uL23 family.</text>
</comment>
<keyword id="KW-1185">Reference proteome</keyword>
<keyword id="KW-0687">Ribonucleoprotein</keyword>
<keyword id="KW-0689">Ribosomal protein</keyword>
<keyword id="KW-0694">RNA-binding</keyword>
<keyword id="KW-0699">rRNA-binding</keyword>
<feature type="chain" id="PRO_0000272873" description="Large ribosomal subunit protein uL23">
    <location>
        <begin position="1"/>
        <end position="101"/>
    </location>
</feature>
<reference key="1">
    <citation type="journal article" date="2002" name="Nat. Genet.">
        <title>Genome sequence of the endocellular obligate symbiont of tsetse flies, Wigglesworthia glossinidia.</title>
        <authorList>
            <person name="Akman L."/>
            <person name="Yamashita A."/>
            <person name="Watanabe H."/>
            <person name="Oshima K."/>
            <person name="Shiba T."/>
            <person name="Hattori M."/>
            <person name="Aksoy S."/>
        </authorList>
    </citation>
    <scope>NUCLEOTIDE SEQUENCE [LARGE SCALE GENOMIC DNA]</scope>
</reference>
<organism>
    <name type="scientific">Wigglesworthia glossinidia brevipalpis</name>
    <dbReference type="NCBI Taxonomy" id="36870"/>
    <lineage>
        <taxon>Bacteria</taxon>
        <taxon>Pseudomonadati</taxon>
        <taxon>Pseudomonadota</taxon>
        <taxon>Gammaproteobacteria</taxon>
        <taxon>Enterobacterales</taxon>
        <taxon>Erwiniaceae</taxon>
        <taxon>Wigglesworthia</taxon>
    </lineage>
</organism>